<proteinExistence type="inferred from homology"/>
<feature type="chain" id="PRO_0000316266" description="Crotonobetaine/carnitine--CoA ligase">
    <location>
        <begin position="1"/>
        <end position="517"/>
    </location>
</feature>
<keyword id="KW-0436">Ligase</keyword>
<keyword id="KW-1185">Reference proteome</keyword>
<accession>A7ZHC8</accession>
<gene>
    <name evidence="1" type="primary">caiC</name>
    <name type="ordered locus">EcE24377A_0039</name>
</gene>
<evidence type="ECO:0000255" key="1">
    <source>
        <dbReference type="HAMAP-Rule" id="MF_01524"/>
    </source>
</evidence>
<evidence type="ECO:0000305" key="2"/>
<organism>
    <name type="scientific">Escherichia coli O139:H28 (strain E24377A / ETEC)</name>
    <dbReference type="NCBI Taxonomy" id="331111"/>
    <lineage>
        <taxon>Bacteria</taxon>
        <taxon>Pseudomonadati</taxon>
        <taxon>Pseudomonadota</taxon>
        <taxon>Gammaproteobacteria</taxon>
        <taxon>Enterobacterales</taxon>
        <taxon>Enterobacteriaceae</taxon>
        <taxon>Escherichia</taxon>
    </lineage>
</organism>
<name>CAIC_ECO24</name>
<protein>
    <recommendedName>
        <fullName evidence="1">Crotonobetaine/carnitine--CoA ligase</fullName>
        <ecNumber evidence="1">6.2.1.48</ecNumber>
    </recommendedName>
</protein>
<dbReference type="EC" id="6.2.1.48" evidence="1"/>
<dbReference type="EMBL" id="CP000800">
    <property type="protein sequence ID" value="ABV16905.1"/>
    <property type="status" value="ALT_INIT"/>
    <property type="molecule type" value="Genomic_DNA"/>
</dbReference>
<dbReference type="RefSeq" id="WP_001406822.1">
    <property type="nucleotide sequence ID" value="NC_009801.1"/>
</dbReference>
<dbReference type="SMR" id="A7ZHC8"/>
<dbReference type="KEGG" id="ecw:EcE24377A_0039"/>
<dbReference type="HOGENOM" id="CLU_000022_59_0_6"/>
<dbReference type="UniPathway" id="UPA00117"/>
<dbReference type="Proteomes" id="UP000001122">
    <property type="component" value="Chromosome"/>
</dbReference>
<dbReference type="GO" id="GO:0051108">
    <property type="term" value="F:carnitine-CoA ligase activity"/>
    <property type="evidence" value="ECO:0007669"/>
    <property type="project" value="InterPro"/>
</dbReference>
<dbReference type="GO" id="GO:0051109">
    <property type="term" value="F:crotonobetaine-CoA ligase activity"/>
    <property type="evidence" value="ECO:0007669"/>
    <property type="project" value="InterPro"/>
</dbReference>
<dbReference type="GO" id="GO:0031956">
    <property type="term" value="F:medium-chain fatty acid-CoA ligase activity"/>
    <property type="evidence" value="ECO:0007669"/>
    <property type="project" value="TreeGrafter"/>
</dbReference>
<dbReference type="GO" id="GO:0009437">
    <property type="term" value="P:carnitine metabolic process"/>
    <property type="evidence" value="ECO:0007669"/>
    <property type="project" value="UniProtKB-UniRule"/>
</dbReference>
<dbReference type="GO" id="GO:0006631">
    <property type="term" value="P:fatty acid metabolic process"/>
    <property type="evidence" value="ECO:0007669"/>
    <property type="project" value="TreeGrafter"/>
</dbReference>
<dbReference type="CDD" id="cd05934">
    <property type="entry name" value="FACL_DitJ_like"/>
    <property type="match status" value="1"/>
</dbReference>
<dbReference type="FunFam" id="3.30.300.30:FF:000011">
    <property type="entry name" value="Crotonobetaine/carnitine--CoA ligase"/>
    <property type="match status" value="1"/>
</dbReference>
<dbReference type="FunFam" id="3.40.50.12780:FF:000017">
    <property type="entry name" value="Crotonobetaine/carnitine--CoA ligase"/>
    <property type="match status" value="1"/>
</dbReference>
<dbReference type="Gene3D" id="3.30.300.30">
    <property type="match status" value="1"/>
</dbReference>
<dbReference type="Gene3D" id="3.40.50.12780">
    <property type="entry name" value="N-terminal domain of ligase-like"/>
    <property type="match status" value="1"/>
</dbReference>
<dbReference type="HAMAP" id="MF_01524">
    <property type="entry name" value="CaiC"/>
    <property type="match status" value="1"/>
</dbReference>
<dbReference type="InterPro" id="IPR025110">
    <property type="entry name" value="AMP-bd_C"/>
</dbReference>
<dbReference type="InterPro" id="IPR045851">
    <property type="entry name" value="AMP-bd_C_sf"/>
</dbReference>
<dbReference type="InterPro" id="IPR020845">
    <property type="entry name" value="AMP-binding_CS"/>
</dbReference>
<dbReference type="InterPro" id="IPR000873">
    <property type="entry name" value="AMP-dep_synth/lig_dom"/>
</dbReference>
<dbReference type="InterPro" id="IPR042099">
    <property type="entry name" value="ANL_N_sf"/>
</dbReference>
<dbReference type="InterPro" id="IPR023456">
    <property type="entry name" value="CaiC"/>
</dbReference>
<dbReference type="NCBIfam" id="NF005947">
    <property type="entry name" value="PRK08008.1"/>
    <property type="match status" value="1"/>
</dbReference>
<dbReference type="PANTHER" id="PTHR43201">
    <property type="entry name" value="ACYL-COA SYNTHETASE"/>
    <property type="match status" value="1"/>
</dbReference>
<dbReference type="PANTHER" id="PTHR43201:SF5">
    <property type="entry name" value="MEDIUM-CHAIN ACYL-COA LIGASE ACSF2, MITOCHONDRIAL"/>
    <property type="match status" value="1"/>
</dbReference>
<dbReference type="Pfam" id="PF00501">
    <property type="entry name" value="AMP-binding"/>
    <property type="match status" value="1"/>
</dbReference>
<dbReference type="Pfam" id="PF13193">
    <property type="entry name" value="AMP-binding_C"/>
    <property type="match status" value="1"/>
</dbReference>
<dbReference type="SUPFAM" id="SSF56801">
    <property type="entry name" value="Acetyl-CoA synthetase-like"/>
    <property type="match status" value="1"/>
</dbReference>
<dbReference type="PROSITE" id="PS00455">
    <property type="entry name" value="AMP_BINDING"/>
    <property type="match status" value="1"/>
</dbReference>
<sequence>MDIIGGQHLRQMWDDLADVYGHKTALICESSGGVVNRYSYLELNQEINRTANLFYTLGIRKGDKVALHLDNCPEFIFCWFGLAKIGAIMVPINARLLREESAWILQNSQACLLVTSAQFYPMYQQIQQEDATQLRHICLTDVALPADDGVSSFTQLKNQQPATLCYAPPLSTDDTAEILFTSGTTSRPKGVVITHYNLRFAGYYSAWQCALRDDDVYLTVMPAFHIDCQCTAAMAAFSAGATFVLVEKYSARAFWGQAQKYRATITECIPMMIRTLMVQPPSANDRQHRLREVMFYLNLSEQEKDAFCERFGVRLLTSYGMTETIVGIIGDRPGDKRRWPSIGRAGFCYEAEIRDDHNRPLPAGEIGEICIKGVPGKTIFKEYFLNPKATAKVLEADGWLHTGDTGYCDEEGFFYFVDRRCNMIKRGGENVSCVELENIIATHPKIQDIVVVGIKDSIRDEAIKAFVVLNEGETLSEEEFFRFCEQNMAKFKVPSYLEIRKDLPRNCSGKIIRKNLK</sequence>
<reference key="1">
    <citation type="journal article" date="2008" name="J. Bacteriol.">
        <title>The pangenome structure of Escherichia coli: comparative genomic analysis of E. coli commensal and pathogenic isolates.</title>
        <authorList>
            <person name="Rasko D.A."/>
            <person name="Rosovitz M.J."/>
            <person name="Myers G.S.A."/>
            <person name="Mongodin E.F."/>
            <person name="Fricke W.F."/>
            <person name="Gajer P."/>
            <person name="Crabtree J."/>
            <person name="Sebaihia M."/>
            <person name="Thomson N.R."/>
            <person name="Chaudhuri R."/>
            <person name="Henderson I.R."/>
            <person name="Sperandio V."/>
            <person name="Ravel J."/>
        </authorList>
    </citation>
    <scope>NUCLEOTIDE SEQUENCE [LARGE SCALE GENOMIC DNA]</scope>
    <source>
        <strain>E24377A / ETEC</strain>
    </source>
</reference>
<comment type="function">
    <text evidence="1">Catalyzes the transfer of CoA to carnitine, generating the initial carnitinyl-CoA needed for the CaiB reaction cycle. Also has activity toward crotonobetaine and gamma-butyrobetaine.</text>
</comment>
<comment type="catalytic activity">
    <reaction evidence="1">
        <text>4-(trimethylamino)butanoate + ATP + CoA = 4-(trimethylamino)butanoyl-CoA + AMP + diphosphate</text>
        <dbReference type="Rhea" id="RHEA:55960"/>
        <dbReference type="ChEBI" id="CHEBI:16244"/>
        <dbReference type="ChEBI" id="CHEBI:30616"/>
        <dbReference type="ChEBI" id="CHEBI:33019"/>
        <dbReference type="ChEBI" id="CHEBI:57287"/>
        <dbReference type="ChEBI" id="CHEBI:61513"/>
        <dbReference type="ChEBI" id="CHEBI:456215"/>
        <dbReference type="EC" id="6.2.1.48"/>
    </reaction>
</comment>
<comment type="catalytic activity">
    <reaction evidence="1">
        <text>crotonobetaine + ATP + CoA = crotonobetainyl-CoA + AMP + diphosphate</text>
        <dbReference type="Rhea" id="RHEA:30079"/>
        <dbReference type="ChEBI" id="CHEBI:17237"/>
        <dbReference type="ChEBI" id="CHEBI:30616"/>
        <dbReference type="ChEBI" id="CHEBI:33019"/>
        <dbReference type="ChEBI" id="CHEBI:57287"/>
        <dbReference type="ChEBI" id="CHEBI:60933"/>
        <dbReference type="ChEBI" id="CHEBI:456215"/>
        <dbReference type="EC" id="6.2.1.48"/>
    </reaction>
</comment>
<comment type="catalytic activity">
    <reaction evidence="1">
        <text>(R)-carnitine + ATP + CoA = (R)-carnitinyl-CoA + AMP + diphosphate</text>
        <dbReference type="Rhea" id="RHEA:28514"/>
        <dbReference type="ChEBI" id="CHEBI:16347"/>
        <dbReference type="ChEBI" id="CHEBI:30616"/>
        <dbReference type="ChEBI" id="CHEBI:33019"/>
        <dbReference type="ChEBI" id="CHEBI:57287"/>
        <dbReference type="ChEBI" id="CHEBI:60932"/>
        <dbReference type="ChEBI" id="CHEBI:456215"/>
        <dbReference type="EC" id="6.2.1.48"/>
    </reaction>
</comment>
<comment type="pathway">
    <text evidence="1">Amine and polyamine metabolism; carnitine metabolism.</text>
</comment>
<comment type="similarity">
    <text evidence="1">Belongs to the ATP-dependent AMP-binding enzyme family.</text>
</comment>
<comment type="sequence caution" evidence="2">
    <conflict type="erroneous initiation">
        <sequence resource="EMBL-CDS" id="ABV16905"/>
    </conflict>
</comment>